<gene>
    <name type="primary">RPL28</name>
</gene>
<reference key="1">
    <citation type="journal article" date="2011" name="Nature">
        <title>A high-resolution map of human evolutionary constraint using 29 mammals.</title>
        <authorList>
            <person name="Lindblad-Toh K."/>
            <person name="Garber M."/>
            <person name="Zuk O."/>
            <person name="Lin M.F."/>
            <person name="Parker B.J."/>
            <person name="Washietl S."/>
            <person name="Kheradpour P."/>
            <person name="Ernst J."/>
            <person name="Jordan G."/>
            <person name="Mauceli E."/>
            <person name="Ward L.D."/>
            <person name="Lowe C.B."/>
            <person name="Holloway A.K."/>
            <person name="Clamp M."/>
            <person name="Gnerre S."/>
            <person name="Alfoldi J."/>
            <person name="Beal K."/>
            <person name="Chang J."/>
            <person name="Clawson H."/>
            <person name="Cuff J."/>
            <person name="Di Palma F."/>
            <person name="Fitzgerald S."/>
            <person name="Flicek P."/>
            <person name="Guttman M."/>
            <person name="Hubisz M.J."/>
            <person name="Jaffe D.B."/>
            <person name="Jungreis I."/>
            <person name="Kent W.J."/>
            <person name="Kostka D."/>
            <person name="Lara M."/>
            <person name="Martins A.L."/>
            <person name="Massingham T."/>
            <person name="Moltke I."/>
            <person name="Raney B.J."/>
            <person name="Rasmussen M.D."/>
            <person name="Robinson J."/>
            <person name="Stark A."/>
            <person name="Vilella A.J."/>
            <person name="Wen J."/>
            <person name="Xie X."/>
            <person name="Zody M.C."/>
            <person name="Baldwin J."/>
            <person name="Bloom T."/>
            <person name="Chin C.W."/>
            <person name="Heiman D."/>
            <person name="Nicol R."/>
            <person name="Nusbaum C."/>
            <person name="Young S."/>
            <person name="Wilkinson J."/>
            <person name="Worley K.C."/>
            <person name="Kovar C.L."/>
            <person name="Muzny D.M."/>
            <person name="Gibbs R.A."/>
            <person name="Cree A."/>
            <person name="Dihn H.H."/>
            <person name="Fowler G."/>
            <person name="Jhangiani S."/>
            <person name="Joshi V."/>
            <person name="Lee S."/>
            <person name="Lewis L.R."/>
            <person name="Nazareth L.V."/>
            <person name="Okwuonu G."/>
            <person name="Santibanez J."/>
            <person name="Warren W.C."/>
            <person name="Mardis E.R."/>
            <person name="Weinstock G.M."/>
            <person name="Wilson R.K."/>
            <person name="Delehaunty K."/>
            <person name="Dooling D."/>
            <person name="Fronik C."/>
            <person name="Fulton L."/>
            <person name="Fulton B."/>
            <person name="Graves T."/>
            <person name="Minx P."/>
            <person name="Sodergren E."/>
            <person name="Birney E."/>
            <person name="Margulies E.H."/>
            <person name="Herrero J."/>
            <person name="Green E.D."/>
            <person name="Haussler D."/>
            <person name="Siepel A."/>
            <person name="Goldman N."/>
            <person name="Pollard K.S."/>
            <person name="Pedersen J.S."/>
            <person name="Lander E.S."/>
            <person name="Kellis M."/>
        </authorList>
    </citation>
    <scope>NUCLEOTIDE SEQUENCE [LARGE SCALE GENOMIC DNA]</scope>
    <source>
        <strain>Thorbecke</strain>
    </source>
</reference>
<reference evidence="14 15" key="2">
    <citation type="journal article" date="2015" name="Nature">
        <title>Structural basis for stop codon recognition in eukaryotes.</title>
        <authorList>
            <person name="Brown A."/>
            <person name="Shao S."/>
            <person name="Murray J."/>
            <person name="Hegde R.S."/>
            <person name="Ramakrishnan V."/>
        </authorList>
    </citation>
    <scope>STRUCTURE BY ELECTRON MICROSCOPY (3.45 ANGSTROMS) OF RIBOSOME</scope>
    <scope>FUNCTION</scope>
    <scope>SUBUNIT</scope>
    <scope>SUBCELLULAR LOCATION</scope>
</reference>
<reference evidence="16" key="3">
    <citation type="journal article" date="2016" name="Cell">
        <title>Decoding mammalian ribosome-mRNA states by translational GTPase complexes.</title>
        <authorList>
            <person name="Shao S."/>
            <person name="Murray J."/>
            <person name="Brown A."/>
            <person name="Taunton J."/>
            <person name="Ramakrishnan V."/>
            <person name="Hegde R.S."/>
        </authorList>
    </citation>
    <scope>STRUCTURE BY ELECTRON MICROSCOPY (3.31 ANGSTROMS) OF RIBOSOME</scope>
    <scope>FUNCTION</scope>
    <scope>SUBCELLULAR LOCATION</scope>
    <scope>SUBUNIT</scope>
</reference>
<reference evidence="17" key="4">
    <citation type="journal article" date="2018" name="Elife">
        <title>Dual tRNA mimicry in the Cricket paralysis virus IRES uncovers an unexpected similarity with the Hepatitis C Virus IRES.</title>
        <authorList>
            <person name="Pisareva V.P."/>
            <person name="Pisarev A.V."/>
            <person name="Fernandez I.S."/>
        </authorList>
    </citation>
    <scope>STRUCTURE BY ELECTRON MICROSCOPY (3.20 ANGSTROMS) OF RIBOSOME</scope>
    <scope>SUBUNIT</scope>
    <scope>SUBCELLULAR LOCATION</scope>
</reference>
<reference evidence="22 23" key="5">
    <citation type="journal article" date="2018" name="Elife">
        <title>Structures of translationally inactive mammalian ribosomes.</title>
        <authorList>
            <person name="Brown A."/>
            <person name="Baird M.R."/>
            <person name="Yip M.C."/>
            <person name="Murray J."/>
            <person name="Shao S."/>
        </authorList>
    </citation>
    <scope>STRUCTURE BY ELECTRON MICROSCOPY (3.30 ANGSTROMS) OF RIBOSOME</scope>
    <scope>SUBCELLULAR LOCATION</scope>
    <scope>SUBUNIT</scope>
</reference>
<reference evidence="20 21" key="6">
    <citation type="journal article" date="2018" name="Mol. Cell">
        <title>ZNF598 is a quality control sensor of collided ribosomes.</title>
        <authorList>
            <person name="Juszkiewicz S."/>
            <person name="Chandrasekaran V."/>
            <person name="Lin Z."/>
            <person name="Kraatz S."/>
            <person name="Ramakrishnan V."/>
            <person name="Hegde R.S."/>
        </authorList>
    </citation>
    <scope>STRUCTURE BY ELECTRON MICROSCOPY (3.80 ANGSTROMS) OF RIBOSOME</scope>
    <scope>SUBCELLULAR LOCATION</scope>
    <scope>SUBUNIT</scope>
</reference>
<reference evidence="24 25" key="7">
    <citation type="journal article" date="2019" name="Elife">
        <title>Structural and mutational analysis of the ribosome-arresting human XBP1u.</title>
        <authorList>
            <person name="Shanmuganathan V."/>
            <person name="Schiller N."/>
            <person name="Magoulopoulou A."/>
            <person name="Cheng J."/>
            <person name="Braunger K."/>
            <person name="Cymer F."/>
            <person name="Berninghausen O."/>
            <person name="Beatrix B."/>
            <person name="Kohno K."/>
            <person name="von Heijne G."/>
            <person name="Beckmann R."/>
        </authorList>
    </citation>
    <scope>STRUCTURE BY ELECTRON MICROSCOPY (3.00 ANGSTROMS) OF RIBOSOME</scope>
    <scope>SUBCELLULAR LOCATION</scope>
    <scope>SUBUNIT</scope>
</reference>
<reference evidence="18 19" key="8">
    <citation type="journal article" date="2019" name="EMBO J.">
        <title>The Israeli acute paralysis virus IRES captures host ribosomes by mimicking a ribosomal state with hybrid tRNAs.</title>
        <authorList>
            <person name="Acosta-Reyes F."/>
            <person name="Neupane R."/>
            <person name="Frank J."/>
            <person name="Fernandez I.S."/>
        </authorList>
    </citation>
    <scope>STRUCTURE BY ELECTRON MICROSCOPY (3.10 ANGSTROMS) OF RIBOSOME</scope>
    <scope>SUBUNIT</scope>
    <scope>SUBCELLULAR LOCATION</scope>
</reference>
<reference evidence="26" key="9">
    <citation type="journal article" date="2019" name="Nat. Struct. Mol. Biol.">
        <title>Mechanism of ribosome stalling during translation of a poly(A) tail.</title>
        <authorList>
            <person name="Chandrasekaran V."/>
            <person name="Juszkiewicz S."/>
            <person name="Choi J."/>
            <person name="Puglisi J.D."/>
            <person name="Brown A."/>
            <person name="Shao S."/>
            <person name="Ramakrishnan V."/>
            <person name="Hegde R.S."/>
        </authorList>
    </citation>
    <scope>STRUCTURE BY ELECTRON MICROSCOPY (2.80 ANGSTROMS) OF RIBOSOME</scope>
    <scope>SUBCELLULAR LOCATION</scope>
    <scope>SUBUNIT</scope>
</reference>
<reference evidence="27 28" key="10">
    <citation type="journal article" date="2020" name="Cell Rep.">
        <title>The Halastavi arva virus intergenic region IRES promotes translation by the simplest possible initiation mechanism.</title>
        <authorList>
            <person name="Abaeva I.S."/>
            <person name="Vicens Q."/>
            <person name="Bochler A."/>
            <person name="Soufari H."/>
            <person name="Simonetti A."/>
            <person name="Pestova T.V."/>
            <person name="Hashem Y."/>
            <person name="Hellen C.U.T."/>
        </authorList>
    </citation>
    <scope>STRUCTURE BY ELECTRON MICROSCOPY (3.49 ANGSTROMS) OF RIBOSOME</scope>
    <scope>SUBCELLULAR LOCATION</scope>
    <scope>SUBUNIT</scope>
</reference>
<reference evidence="30 31" key="11">
    <citation type="journal article" date="2022" name="Mol. Cell">
        <title>Direct epitranscriptomic regulation of mammalian translation initiation through N4-acetylcytidine.</title>
        <authorList>
            <person name="Arango D."/>
            <person name="Sturgill D."/>
            <person name="Yang R."/>
            <person name="Kanai T."/>
            <person name="Bauer P."/>
            <person name="Roy J."/>
            <person name="Wang Z."/>
            <person name="Hosogane M."/>
            <person name="Schiffers S."/>
            <person name="Oberdoerffer S."/>
        </authorList>
    </citation>
    <scope>STRUCTURE BY ELECTRON MICROSCOPY (2.80 ANGSTROMS) OF RIBOSOME</scope>
    <scope>SUBCELLULAR LOCATION</scope>
    <scope>SUBUNIT</scope>
</reference>
<reference evidence="29" key="12">
    <citation type="journal article" date="2023" name="Nature">
        <title>A molecular network of conserved factors keeps ribosomes dormant in the egg.</title>
        <authorList>
            <person name="Leesch F."/>
            <person name="Lorenzo-Orts L."/>
            <person name="Pribitzer C."/>
            <person name="Grishkovskaya I."/>
            <person name="Roehsner J."/>
            <person name="Chugunova A."/>
            <person name="Matzinger M."/>
            <person name="Roitinger E."/>
            <person name="Belacic K."/>
            <person name="Kandolf S."/>
            <person name="Lin T.Y."/>
            <person name="Mechtler K."/>
            <person name="Meinhart A."/>
            <person name="Haselbach D."/>
            <person name="Pauli A."/>
        </authorList>
    </citation>
    <scope>STRUCTURE BY ELECTRON MICROSCOPY (2.30 ANGSTROMS) OF RIBOSOME</scope>
    <scope>SUBCELLULAR LOCATION</scope>
    <scope>SUBUNIT</scope>
</reference>
<proteinExistence type="evidence at protein level"/>
<comment type="function">
    <text evidence="2 3">Component of the large ribosomal subunit (PubMed:26245381, PubMed:27863242). The ribosome is a large ribonucleoprotein complex responsible for the synthesis of proteins in the cell (PubMed:26245381, PubMed:27863242).</text>
</comment>
<comment type="subunit">
    <text evidence="2 3 4 5 6 7 8 9 10 11 12">Component of the large ribosomal subunit.</text>
</comment>
<comment type="subcellular location">
    <subcellularLocation>
        <location evidence="2 3 4 5 6 7 8 9 10 11 12">Cytoplasm</location>
    </subcellularLocation>
</comment>
<comment type="similarity">
    <text evidence="13">Belongs to the eukaryotic ribosomal protein eL28 family.</text>
</comment>
<dbReference type="EMBL" id="AAGW02044095">
    <property type="status" value="NOT_ANNOTATED_CDS"/>
    <property type="molecule type" value="Genomic_DNA"/>
</dbReference>
<dbReference type="RefSeq" id="XP_002713247.1">
    <property type="nucleotide sequence ID" value="XM_002713201.3"/>
</dbReference>
<dbReference type="PDB" id="3JAG">
    <property type="method" value="EM"/>
    <property type="resolution" value="3.65 A"/>
    <property type="chains" value="r=2-126"/>
</dbReference>
<dbReference type="PDB" id="3JAH">
    <property type="method" value="EM"/>
    <property type="resolution" value="3.45 A"/>
    <property type="chains" value="r=2-126"/>
</dbReference>
<dbReference type="PDB" id="3JAI">
    <property type="method" value="EM"/>
    <property type="resolution" value="3.65 A"/>
    <property type="chains" value="r=2-126"/>
</dbReference>
<dbReference type="PDB" id="5LZS">
    <property type="method" value="EM"/>
    <property type="resolution" value="3.31 A"/>
    <property type="chains" value="r=1-137"/>
</dbReference>
<dbReference type="PDB" id="5LZT">
    <property type="method" value="EM"/>
    <property type="resolution" value="3.65 A"/>
    <property type="chains" value="r=1-137"/>
</dbReference>
<dbReference type="PDB" id="5LZU">
    <property type="method" value="EM"/>
    <property type="resolution" value="3.75 A"/>
    <property type="chains" value="r=1-137"/>
</dbReference>
<dbReference type="PDB" id="5LZV">
    <property type="method" value="EM"/>
    <property type="resolution" value="3.35 A"/>
    <property type="chains" value="r=1-137"/>
</dbReference>
<dbReference type="PDB" id="5LZW">
    <property type="method" value="EM"/>
    <property type="resolution" value="3.53 A"/>
    <property type="chains" value="r=1-137"/>
</dbReference>
<dbReference type="PDB" id="5LZX">
    <property type="method" value="EM"/>
    <property type="resolution" value="3.67 A"/>
    <property type="chains" value="r=1-137"/>
</dbReference>
<dbReference type="PDB" id="5LZY">
    <property type="method" value="EM"/>
    <property type="resolution" value="3.99 A"/>
    <property type="chains" value="r=1-137"/>
</dbReference>
<dbReference type="PDB" id="5LZZ">
    <property type="method" value="EM"/>
    <property type="resolution" value="3.47 A"/>
    <property type="chains" value="r=1-137"/>
</dbReference>
<dbReference type="PDB" id="6D90">
    <property type="method" value="EM"/>
    <property type="resolution" value="3.20 A"/>
    <property type="chains" value="r=1-137"/>
</dbReference>
<dbReference type="PDB" id="6D9J">
    <property type="method" value="EM"/>
    <property type="resolution" value="3.20 A"/>
    <property type="chains" value="r=1-137"/>
</dbReference>
<dbReference type="PDB" id="6FTG">
    <property type="method" value="EM"/>
    <property type="resolution" value="9.10 A"/>
    <property type="chains" value="r=2-137"/>
</dbReference>
<dbReference type="PDB" id="6FTI">
    <property type="method" value="EM"/>
    <property type="resolution" value="4.20 A"/>
    <property type="chains" value="r=2-137"/>
</dbReference>
<dbReference type="PDB" id="6FTJ">
    <property type="method" value="EM"/>
    <property type="resolution" value="4.70 A"/>
    <property type="chains" value="r=2-137"/>
</dbReference>
<dbReference type="PDB" id="6HCF">
    <property type="method" value="EM"/>
    <property type="resolution" value="3.90 A"/>
    <property type="chains" value="r3=1-137"/>
</dbReference>
<dbReference type="PDB" id="6HCJ">
    <property type="method" value="EM"/>
    <property type="resolution" value="3.80 A"/>
    <property type="chains" value="r3=1-137"/>
</dbReference>
<dbReference type="PDB" id="6HCM">
    <property type="method" value="EM"/>
    <property type="resolution" value="6.80 A"/>
    <property type="chains" value="r3=1-137"/>
</dbReference>
<dbReference type="PDB" id="6HCQ">
    <property type="method" value="EM"/>
    <property type="resolution" value="6.50 A"/>
    <property type="chains" value="r3=1-137"/>
</dbReference>
<dbReference type="PDB" id="6MTB">
    <property type="method" value="EM"/>
    <property type="resolution" value="3.60 A"/>
    <property type="chains" value="r=2-125"/>
</dbReference>
<dbReference type="PDB" id="6MTC">
    <property type="method" value="EM"/>
    <property type="resolution" value="3.40 A"/>
    <property type="chains" value="r=2-125"/>
</dbReference>
<dbReference type="PDB" id="6MTD">
    <property type="method" value="EM"/>
    <property type="resolution" value="3.30 A"/>
    <property type="chains" value="r=2-125"/>
</dbReference>
<dbReference type="PDB" id="6MTE">
    <property type="method" value="EM"/>
    <property type="resolution" value="3.40 A"/>
    <property type="chains" value="r=2-125"/>
</dbReference>
<dbReference type="PDB" id="6P5I">
    <property type="method" value="EM"/>
    <property type="resolution" value="3.10 A"/>
    <property type="chains" value="Ar=1-137"/>
</dbReference>
<dbReference type="PDB" id="6P5J">
    <property type="method" value="EM"/>
    <property type="resolution" value="3.10 A"/>
    <property type="chains" value="Ar=1-137"/>
</dbReference>
<dbReference type="PDB" id="6P5K">
    <property type="method" value="EM"/>
    <property type="resolution" value="3.10 A"/>
    <property type="chains" value="Ar=1-137"/>
</dbReference>
<dbReference type="PDB" id="6P5N">
    <property type="method" value="EM"/>
    <property type="resolution" value="3.20 A"/>
    <property type="chains" value="Ar=1-137"/>
</dbReference>
<dbReference type="PDB" id="6R5Q">
    <property type="method" value="EM"/>
    <property type="resolution" value="3.00 A"/>
    <property type="chains" value="r=2-125"/>
</dbReference>
<dbReference type="PDB" id="6R6G">
    <property type="method" value="EM"/>
    <property type="resolution" value="3.70 A"/>
    <property type="chains" value="r=2-125"/>
</dbReference>
<dbReference type="PDB" id="6R6P">
    <property type="method" value="EM"/>
    <property type="resolution" value="3.10 A"/>
    <property type="chains" value="r=2-126"/>
</dbReference>
<dbReference type="PDB" id="6R7Q">
    <property type="method" value="EM"/>
    <property type="resolution" value="3.90 A"/>
    <property type="chains" value="r=2-125"/>
</dbReference>
<dbReference type="PDB" id="6SGC">
    <property type="method" value="EM"/>
    <property type="resolution" value="2.80 A"/>
    <property type="chains" value="r2=1-137"/>
</dbReference>
<dbReference type="PDB" id="6T59">
    <property type="method" value="EM"/>
    <property type="resolution" value="3.11 A"/>
    <property type="chains" value="r3=1-137"/>
</dbReference>
<dbReference type="PDB" id="6ZVK">
    <property type="method" value="EM"/>
    <property type="resolution" value="3.49 A"/>
    <property type="chains" value="J2=2-126"/>
</dbReference>
<dbReference type="PDB" id="7A01">
    <property type="method" value="EM"/>
    <property type="resolution" value="3.60 A"/>
    <property type="chains" value="J2=2-126"/>
</dbReference>
<dbReference type="PDB" id="7MDZ">
    <property type="method" value="EM"/>
    <property type="resolution" value="3.20 A"/>
    <property type="chains" value="r=1-137"/>
</dbReference>
<dbReference type="PDB" id="7NFX">
    <property type="method" value="EM"/>
    <property type="resolution" value="3.20 A"/>
    <property type="chains" value="r=1-137"/>
</dbReference>
<dbReference type="PDB" id="7NWG">
    <property type="method" value="EM"/>
    <property type="resolution" value="3.80 A"/>
    <property type="chains" value="r3=1-137"/>
</dbReference>
<dbReference type="PDB" id="7NWH">
    <property type="method" value="EM"/>
    <property type="resolution" value="4.10 A"/>
    <property type="chains" value="r=1-137"/>
</dbReference>
<dbReference type="PDB" id="7NWI">
    <property type="method" value="EM"/>
    <property type="resolution" value="3.13 A"/>
    <property type="chains" value="r=1-137"/>
</dbReference>
<dbReference type="PDB" id="7OBR">
    <property type="method" value="EM"/>
    <property type="resolution" value="2.80 A"/>
    <property type="chains" value="r=1-137"/>
</dbReference>
<dbReference type="PDB" id="7OYD">
    <property type="method" value="EM"/>
    <property type="resolution" value="2.30 A"/>
    <property type="chains" value="r=1-137"/>
</dbReference>
<dbReference type="PDB" id="7QWQ">
    <property type="method" value="EM"/>
    <property type="resolution" value="2.83 A"/>
    <property type="chains" value="r=1-137"/>
</dbReference>
<dbReference type="PDB" id="7QWR">
    <property type="method" value="EM"/>
    <property type="resolution" value="2.90 A"/>
    <property type="chains" value="r=1-137"/>
</dbReference>
<dbReference type="PDB" id="7QWS">
    <property type="method" value="EM"/>
    <property type="resolution" value="3.40 A"/>
    <property type="chains" value="r=1-137"/>
</dbReference>
<dbReference type="PDB" id="7TM3">
    <property type="method" value="EM"/>
    <property type="resolution" value="3.25 A"/>
    <property type="chains" value="r=1-137"/>
</dbReference>
<dbReference type="PDB" id="7TOQ">
    <property type="method" value="EM"/>
    <property type="resolution" value="3.10 A"/>
    <property type="chains" value="EL28=2-126"/>
</dbReference>
<dbReference type="PDB" id="7TOR">
    <property type="method" value="EM"/>
    <property type="resolution" value="2.90 A"/>
    <property type="chains" value="ALNW=2-125"/>
</dbReference>
<dbReference type="PDB" id="7TUT">
    <property type="method" value="EM"/>
    <property type="resolution" value="3.88 A"/>
    <property type="chains" value="r=1-137"/>
</dbReference>
<dbReference type="PDB" id="7UCJ">
    <property type="method" value="EM"/>
    <property type="resolution" value="3.10 A"/>
    <property type="chains" value="r=2-125"/>
</dbReference>
<dbReference type="PDB" id="7UCK">
    <property type="method" value="EM"/>
    <property type="resolution" value="2.80 A"/>
    <property type="chains" value="r=2-125"/>
</dbReference>
<dbReference type="PDB" id="8B5L">
    <property type="method" value="EM"/>
    <property type="resolution" value="2.86 A"/>
    <property type="chains" value="r=2-125"/>
</dbReference>
<dbReference type="PDB" id="8B6C">
    <property type="method" value="EM"/>
    <property type="resolution" value="2.79 A"/>
    <property type="chains" value="r=2-125"/>
</dbReference>
<dbReference type="PDB" id="8BHF">
    <property type="method" value="EM"/>
    <property type="resolution" value="3.10 A"/>
    <property type="chains" value="d1=2-125"/>
</dbReference>
<dbReference type="PDB" id="8BPO">
    <property type="method" value="EM"/>
    <property type="resolution" value="2.80 A"/>
    <property type="chains" value="p2=1-137"/>
</dbReference>
<dbReference type="PDB" id="8BTK">
    <property type="method" value="EM"/>
    <property type="resolution" value="3.50 A"/>
    <property type="chains" value="Br=1-137"/>
</dbReference>
<dbReference type="PDB" id="8P2K">
    <property type="method" value="EM"/>
    <property type="resolution" value="2.90 A"/>
    <property type="chains" value="Br=1-137"/>
</dbReference>
<dbReference type="PDB" id="8RJB">
    <property type="method" value="EM"/>
    <property type="resolution" value="2.69 A"/>
    <property type="chains" value="r=1-137"/>
</dbReference>
<dbReference type="PDB" id="8RJC">
    <property type="method" value="EM"/>
    <property type="resolution" value="2.90 A"/>
    <property type="chains" value="r=1-137"/>
</dbReference>
<dbReference type="PDB" id="8RJD">
    <property type="method" value="EM"/>
    <property type="resolution" value="2.79 A"/>
    <property type="chains" value="r=1-137"/>
</dbReference>
<dbReference type="PDB" id="8SCB">
    <property type="method" value="EM"/>
    <property type="resolution" value="2.50 A"/>
    <property type="chains" value="r=1-137"/>
</dbReference>
<dbReference type="PDB" id="8VFT">
    <property type="method" value="EM"/>
    <property type="resolution" value="3.30 A"/>
    <property type="chains" value="r=1-137"/>
</dbReference>
<dbReference type="PDB" id="9BDL">
    <property type="method" value="EM"/>
    <property type="resolution" value="2.80 A"/>
    <property type="chains" value="ALNW=2-125"/>
</dbReference>
<dbReference type="PDB" id="9BDN">
    <property type="method" value="EM"/>
    <property type="resolution" value="3.10 A"/>
    <property type="chains" value="ALNW=2-125"/>
</dbReference>
<dbReference type="PDB" id="9BDP">
    <property type="method" value="EM"/>
    <property type="resolution" value="3.70 A"/>
    <property type="chains" value="ALNW=2-125"/>
</dbReference>
<dbReference type="PDB" id="9F1B">
    <property type="method" value="EM"/>
    <property type="resolution" value="3.01 A"/>
    <property type="chains" value="Br=1-137"/>
</dbReference>
<dbReference type="PDB" id="9F1C">
    <property type="method" value="EM"/>
    <property type="resolution" value="3.78 A"/>
    <property type="chains" value="Br=1-137"/>
</dbReference>
<dbReference type="PDB" id="9F1D">
    <property type="method" value="EM"/>
    <property type="resolution" value="3.26 A"/>
    <property type="chains" value="Br=1-137"/>
</dbReference>
<dbReference type="PDBsum" id="3JAG"/>
<dbReference type="PDBsum" id="3JAH"/>
<dbReference type="PDBsum" id="3JAI"/>
<dbReference type="PDBsum" id="5LZS"/>
<dbReference type="PDBsum" id="5LZT"/>
<dbReference type="PDBsum" id="5LZU"/>
<dbReference type="PDBsum" id="5LZV"/>
<dbReference type="PDBsum" id="5LZW"/>
<dbReference type="PDBsum" id="5LZX"/>
<dbReference type="PDBsum" id="5LZY"/>
<dbReference type="PDBsum" id="5LZZ"/>
<dbReference type="PDBsum" id="6D90"/>
<dbReference type="PDBsum" id="6D9J"/>
<dbReference type="PDBsum" id="6FTG"/>
<dbReference type="PDBsum" id="6FTI"/>
<dbReference type="PDBsum" id="6FTJ"/>
<dbReference type="PDBsum" id="6HCF"/>
<dbReference type="PDBsum" id="6HCJ"/>
<dbReference type="PDBsum" id="6HCM"/>
<dbReference type="PDBsum" id="6HCQ"/>
<dbReference type="PDBsum" id="6MTB"/>
<dbReference type="PDBsum" id="6MTC"/>
<dbReference type="PDBsum" id="6MTD"/>
<dbReference type="PDBsum" id="6MTE"/>
<dbReference type="PDBsum" id="6P5I"/>
<dbReference type="PDBsum" id="6P5J"/>
<dbReference type="PDBsum" id="6P5K"/>
<dbReference type="PDBsum" id="6P5N"/>
<dbReference type="PDBsum" id="6R5Q"/>
<dbReference type="PDBsum" id="6R6G"/>
<dbReference type="PDBsum" id="6R6P"/>
<dbReference type="PDBsum" id="6R7Q"/>
<dbReference type="PDBsum" id="6SGC"/>
<dbReference type="PDBsum" id="6T59"/>
<dbReference type="PDBsum" id="6ZVK"/>
<dbReference type="PDBsum" id="7A01"/>
<dbReference type="PDBsum" id="7MDZ"/>
<dbReference type="PDBsum" id="7NFX"/>
<dbReference type="PDBsum" id="7NWG"/>
<dbReference type="PDBsum" id="7NWH"/>
<dbReference type="PDBsum" id="7NWI"/>
<dbReference type="PDBsum" id="7OBR"/>
<dbReference type="PDBsum" id="7OYD"/>
<dbReference type="PDBsum" id="7QWQ"/>
<dbReference type="PDBsum" id="7QWR"/>
<dbReference type="PDBsum" id="7QWS"/>
<dbReference type="PDBsum" id="7TM3"/>
<dbReference type="PDBsum" id="7TOQ"/>
<dbReference type="PDBsum" id="7TOR"/>
<dbReference type="PDBsum" id="7TUT"/>
<dbReference type="PDBsum" id="7UCJ"/>
<dbReference type="PDBsum" id="7UCK"/>
<dbReference type="PDBsum" id="8B5L"/>
<dbReference type="PDBsum" id="8B6C"/>
<dbReference type="PDBsum" id="8BHF"/>
<dbReference type="PDBsum" id="8BPO"/>
<dbReference type="PDBsum" id="8BTK"/>
<dbReference type="PDBsum" id="8P2K"/>
<dbReference type="PDBsum" id="8RJB"/>
<dbReference type="PDBsum" id="8RJC"/>
<dbReference type="PDBsum" id="8RJD"/>
<dbReference type="PDBsum" id="8SCB"/>
<dbReference type="PDBsum" id="8VFT"/>
<dbReference type="PDBsum" id="9BDL"/>
<dbReference type="PDBsum" id="9BDN"/>
<dbReference type="PDBsum" id="9BDP"/>
<dbReference type="PDBsum" id="9F1B"/>
<dbReference type="PDBsum" id="9F1C"/>
<dbReference type="PDBsum" id="9F1D"/>
<dbReference type="EMDB" id="EMD-0099"/>
<dbReference type="EMDB" id="EMD-0100"/>
<dbReference type="EMDB" id="EMD-0192"/>
<dbReference type="EMDB" id="EMD-0194"/>
<dbReference type="EMDB" id="EMD-0195"/>
<dbReference type="EMDB" id="EMD-0197"/>
<dbReference type="EMDB" id="EMD-10181"/>
<dbReference type="EMDB" id="EMD-10380"/>
<dbReference type="EMDB" id="EMD-11459"/>
<dbReference type="EMDB" id="EMD-11590"/>
<dbReference type="EMDB" id="EMD-12303"/>
<dbReference type="EMDB" id="EMD-12631"/>
<dbReference type="EMDB" id="EMD-12632"/>
<dbReference type="EMDB" id="EMD-12633"/>
<dbReference type="EMDB" id="EMD-12801"/>
<dbReference type="EMDB" id="EMD-13114"/>
<dbReference type="EMDB" id="EMD-14191"/>
<dbReference type="EMDB" id="EMD-14192"/>
<dbReference type="EMDB" id="EMD-14193"/>
<dbReference type="EMDB" id="EMD-15860"/>
<dbReference type="EMDB" id="EMD-15863"/>
<dbReference type="EMDB" id="EMD-16052"/>
<dbReference type="EMDB" id="EMD-16155"/>
<dbReference type="EMDB" id="EMD-16232"/>
<dbReference type="EMDB" id="EMD-17367"/>
<dbReference type="EMDB" id="EMD-19195"/>
<dbReference type="EMDB" id="EMD-19197"/>
<dbReference type="EMDB" id="EMD-19198"/>
<dbReference type="EMDB" id="EMD-20255"/>
<dbReference type="EMDB" id="EMD-20256"/>
<dbReference type="EMDB" id="EMD-20257"/>
<dbReference type="EMDB" id="EMD-20258"/>
<dbReference type="EMDB" id="EMD-23785"/>
<dbReference type="EMDB" id="EMD-25994"/>
<dbReference type="EMDB" id="EMD-26035"/>
<dbReference type="EMDB" id="EMD-26036"/>
<dbReference type="EMDB" id="EMD-26133"/>
<dbReference type="EMDB" id="EMD-26444"/>
<dbReference type="EMDB" id="EMD-26445"/>
<dbReference type="EMDB" id="EMD-40344"/>
<dbReference type="EMDB" id="EMD-4130"/>
<dbReference type="EMDB" id="EMD-4131"/>
<dbReference type="EMDB" id="EMD-4132"/>
<dbReference type="EMDB" id="EMD-4133"/>
<dbReference type="EMDB" id="EMD-4134"/>
<dbReference type="EMDB" id="EMD-4135"/>
<dbReference type="EMDB" id="EMD-4136"/>
<dbReference type="EMDB" id="EMD-4137"/>
<dbReference type="EMDB" id="EMD-4300"/>
<dbReference type="EMDB" id="EMD-4315"/>
<dbReference type="EMDB" id="EMD-4316"/>
<dbReference type="EMDB" id="EMD-4317"/>
<dbReference type="EMDB" id="EMD-43189"/>
<dbReference type="EMDB" id="EMD-44461"/>
<dbReference type="EMDB" id="EMD-44463"/>
<dbReference type="EMDB" id="EMD-44464"/>
<dbReference type="EMDB" id="EMD-4729"/>
<dbReference type="EMDB" id="EMD-4735"/>
<dbReference type="EMDB" id="EMD-4737"/>
<dbReference type="EMDB" id="EMD-4745"/>
<dbReference type="EMDB" id="EMD-50124"/>
<dbReference type="EMDB" id="EMD-50125"/>
<dbReference type="EMDB" id="EMD-50126"/>
<dbReference type="EMDB" id="EMD-7834"/>
<dbReference type="EMDB" id="EMD-7836"/>
<dbReference type="EMDB" id="EMD-9237"/>
<dbReference type="EMDB" id="EMD-9239"/>
<dbReference type="EMDB" id="EMD-9240"/>
<dbReference type="EMDB" id="EMD-9242"/>
<dbReference type="SMR" id="G1U7L1"/>
<dbReference type="FunCoup" id="G1U7L1">
    <property type="interactions" value="1026"/>
</dbReference>
<dbReference type="IntAct" id="G1U7L1">
    <property type="interactions" value="1"/>
</dbReference>
<dbReference type="STRING" id="9986.ENSOCUP00000025418"/>
<dbReference type="PaxDb" id="9986-ENSOCUP00000025418"/>
<dbReference type="Ensembl" id="ENSOCUT00000023684.2">
    <property type="protein sequence ID" value="ENSOCUP00000025418.1"/>
    <property type="gene ID" value="ENSOCUG00000027112.2"/>
</dbReference>
<dbReference type="KEGG" id="ocu:100358162"/>
<dbReference type="eggNOG" id="KOG3412">
    <property type="taxonomic scope" value="Eukaryota"/>
</dbReference>
<dbReference type="GeneTree" id="ENSGT00390000008732"/>
<dbReference type="HOGENOM" id="CLU_106801_1_0_1"/>
<dbReference type="InParanoid" id="G1U7L1"/>
<dbReference type="OMA" id="WMIIRNC"/>
<dbReference type="OrthoDB" id="2573163at2759"/>
<dbReference type="TreeFam" id="TF300173"/>
<dbReference type="Proteomes" id="UP000001811">
    <property type="component" value="Chromosome 9"/>
</dbReference>
<dbReference type="Bgee" id="ENSOCUG00000027112">
    <property type="expression patterns" value="Expressed in ovary and 16 other cell types or tissues"/>
</dbReference>
<dbReference type="GO" id="GO:0005737">
    <property type="term" value="C:cytoplasm"/>
    <property type="evidence" value="ECO:0007669"/>
    <property type="project" value="UniProtKB-SubCell"/>
</dbReference>
<dbReference type="GO" id="GO:1990904">
    <property type="term" value="C:ribonucleoprotein complex"/>
    <property type="evidence" value="ECO:0007669"/>
    <property type="project" value="UniProtKB-KW"/>
</dbReference>
<dbReference type="GO" id="GO:0005840">
    <property type="term" value="C:ribosome"/>
    <property type="evidence" value="ECO:0007669"/>
    <property type="project" value="UniProtKB-KW"/>
</dbReference>
<dbReference type="GO" id="GO:0003735">
    <property type="term" value="F:structural constituent of ribosome"/>
    <property type="evidence" value="ECO:0007669"/>
    <property type="project" value="InterPro"/>
</dbReference>
<dbReference type="GO" id="GO:0006412">
    <property type="term" value="P:translation"/>
    <property type="evidence" value="ECO:0007669"/>
    <property type="project" value="InterPro"/>
</dbReference>
<dbReference type="FunFam" id="3.30.390.110:FF:000002">
    <property type="entry name" value="60S ribosomal protein L28"/>
    <property type="match status" value="1"/>
</dbReference>
<dbReference type="Gene3D" id="3.30.390.110">
    <property type="match status" value="1"/>
</dbReference>
<dbReference type="InterPro" id="IPR002672">
    <property type="entry name" value="Ribosomal_eL28"/>
</dbReference>
<dbReference type="InterPro" id="IPR029004">
    <property type="entry name" value="Ribosomal_eL28/Mak16"/>
</dbReference>
<dbReference type="PANTHER" id="PTHR10544">
    <property type="entry name" value="60S RIBOSOMAL PROTEIN L28"/>
    <property type="match status" value="1"/>
</dbReference>
<dbReference type="Pfam" id="PF01778">
    <property type="entry name" value="Ribosomal_L28e"/>
    <property type="match status" value="1"/>
</dbReference>
<feature type="initiator methionine" description="Removed" evidence="1">
    <location>
        <position position="1"/>
    </location>
</feature>
<feature type="chain" id="PRO_0000460118" description="Large ribosomal subunit protein eL28">
    <location>
        <begin position="2"/>
        <end position="137"/>
    </location>
</feature>
<feature type="modified residue" description="N-acetylserine" evidence="1">
    <location>
        <position position="2"/>
    </location>
</feature>
<feature type="modified residue" description="Phosphoserine" evidence="1">
    <location>
        <position position="115"/>
    </location>
</feature>
<feature type="cross-link" description="Glycyl lysine isopeptide (Lys-Gly) (interchain with G-Cter in SUMO2)" evidence="1">
    <location>
        <position position="58"/>
    </location>
</feature>
<feature type="cross-link" description="Glycyl lysine isopeptide (Lys-Gly) (interchain with G-Cter in SUMO2)" evidence="1">
    <location>
        <position position="65"/>
    </location>
</feature>
<protein>
    <recommendedName>
        <fullName>Large ribosomal subunit protein eL28</fullName>
    </recommendedName>
    <alternativeName>
        <fullName>60S ribosomal protein L28</fullName>
    </alternativeName>
</protein>
<name>RL28_RABIT</name>
<evidence type="ECO:0000250" key="1">
    <source>
        <dbReference type="UniProtKB" id="P46779"/>
    </source>
</evidence>
<evidence type="ECO:0000269" key="2">
    <source>
    </source>
</evidence>
<evidence type="ECO:0000269" key="3">
    <source>
    </source>
</evidence>
<evidence type="ECO:0000269" key="4">
    <source>
    </source>
</evidence>
<evidence type="ECO:0000269" key="5">
    <source>
    </source>
</evidence>
<evidence type="ECO:0000269" key="6">
    <source>
    </source>
</evidence>
<evidence type="ECO:0000269" key="7">
    <source>
    </source>
</evidence>
<evidence type="ECO:0000269" key="8">
    <source>
    </source>
</evidence>
<evidence type="ECO:0000269" key="9">
    <source>
    </source>
</evidence>
<evidence type="ECO:0000269" key="10">
    <source>
    </source>
</evidence>
<evidence type="ECO:0000269" key="11">
    <source>
    </source>
</evidence>
<evidence type="ECO:0000269" key="12">
    <source>
    </source>
</evidence>
<evidence type="ECO:0000305" key="13"/>
<evidence type="ECO:0007744" key="14">
    <source>
        <dbReference type="PDB" id="3JAG"/>
    </source>
</evidence>
<evidence type="ECO:0007744" key="15">
    <source>
        <dbReference type="PDB" id="3JAH"/>
    </source>
</evidence>
<evidence type="ECO:0007744" key="16">
    <source>
        <dbReference type="PDB" id="5LZU"/>
    </source>
</evidence>
<evidence type="ECO:0007744" key="17">
    <source>
        <dbReference type="PDB" id="6D90"/>
    </source>
</evidence>
<evidence type="ECO:0007744" key="18">
    <source>
        <dbReference type="PDB" id="6D9J"/>
    </source>
</evidence>
<evidence type="ECO:0007744" key="19">
    <source>
        <dbReference type="PDB" id="6FTI"/>
    </source>
</evidence>
<evidence type="ECO:0007744" key="20">
    <source>
        <dbReference type="PDB" id="6HCF"/>
    </source>
</evidence>
<evidence type="ECO:0007744" key="21">
    <source>
        <dbReference type="PDB" id="6HCJ"/>
    </source>
</evidence>
<evidence type="ECO:0007744" key="22">
    <source>
        <dbReference type="PDB" id="6MTB"/>
    </source>
</evidence>
<evidence type="ECO:0007744" key="23">
    <source>
        <dbReference type="PDB" id="6MTC"/>
    </source>
</evidence>
<evidence type="ECO:0007744" key="24">
    <source>
        <dbReference type="PDB" id="6R5Q"/>
    </source>
</evidence>
<evidence type="ECO:0007744" key="25">
    <source>
        <dbReference type="PDB" id="6R6G"/>
    </source>
</evidence>
<evidence type="ECO:0007744" key="26">
    <source>
        <dbReference type="PDB" id="6SGC"/>
    </source>
</evidence>
<evidence type="ECO:0007744" key="27">
    <source>
        <dbReference type="PDB" id="6ZVK"/>
    </source>
</evidence>
<evidence type="ECO:0007744" key="28">
    <source>
        <dbReference type="PDB" id="7A01"/>
    </source>
</evidence>
<evidence type="ECO:0007744" key="29">
    <source>
        <dbReference type="PDB" id="7OYD"/>
    </source>
</evidence>
<evidence type="ECO:0007744" key="30">
    <source>
        <dbReference type="PDB" id="7UCJ"/>
    </source>
</evidence>
<evidence type="ECO:0007744" key="31">
    <source>
        <dbReference type="PDB" id="7UCK"/>
    </source>
</evidence>
<sequence length="137" mass="15746">MSAHLQWMVVRNCSSFLIKRNKQTYSTEPNNLKARNSFRYNGLIHRKTVGVEPAADGKGVVVVMKRRSGQRKPATSYVRTTINKNARATLSSIRHMIRKNKYHPDLRMAAIRRASAILRSQKPVMVKRKRTRPTKSS</sequence>
<accession>G1U7L1</accession>
<keyword id="KW-0002">3D-structure</keyword>
<keyword id="KW-0007">Acetylation</keyword>
<keyword id="KW-0963">Cytoplasm</keyword>
<keyword id="KW-1017">Isopeptide bond</keyword>
<keyword id="KW-0597">Phosphoprotein</keyword>
<keyword id="KW-1185">Reference proteome</keyword>
<keyword id="KW-0687">Ribonucleoprotein</keyword>
<keyword id="KW-0689">Ribosomal protein</keyword>
<keyword id="KW-0832">Ubl conjugation</keyword>
<organism>
    <name type="scientific">Oryctolagus cuniculus</name>
    <name type="common">Rabbit</name>
    <dbReference type="NCBI Taxonomy" id="9986"/>
    <lineage>
        <taxon>Eukaryota</taxon>
        <taxon>Metazoa</taxon>
        <taxon>Chordata</taxon>
        <taxon>Craniata</taxon>
        <taxon>Vertebrata</taxon>
        <taxon>Euteleostomi</taxon>
        <taxon>Mammalia</taxon>
        <taxon>Eutheria</taxon>
        <taxon>Euarchontoglires</taxon>
        <taxon>Glires</taxon>
        <taxon>Lagomorpha</taxon>
        <taxon>Leporidae</taxon>
        <taxon>Oryctolagus</taxon>
    </lineage>
</organism>